<sequence length="316" mass="35363">MANLKEIRDRIVSVKNTRKITEAMRLVAAAKVRRAQDQVLKSRPFADKLARVLENIQSRVQFEAVDSPLLSKREVKSISLVCITADRGLCGGYNTNIIKKVEIRYAELVKQGYQPNLILVGKKAIGYFQNRKDRYVIKSTFKELEQVPTVKDSEGVTNEILAEFLSENSDRVEIIYTKFITLVSCAPVVQTLLPLDPQGIAEENDEIFRLTTKDSKLLVEKSNIEKSDSEKLPSDIVFEQSPDQLLDSLLPLYLQNQVLRALQESAASELACRMTAMNNASDNAKELASTLNLTYNKARQAAITQEILEVVGGSVV</sequence>
<protein>
    <recommendedName>
        <fullName evidence="1">ATP synthase gamma chain</fullName>
    </recommendedName>
    <alternativeName>
        <fullName evidence="1">ATP synthase F1 sector gamma subunit</fullName>
    </alternativeName>
    <alternativeName>
        <fullName evidence="1">F-ATPase gamma subunit</fullName>
    </alternativeName>
</protein>
<reference key="1">
    <citation type="journal article" date="2007" name="PLoS Genet.">
        <title>Patterns and implications of gene gain and loss in the evolution of Prochlorococcus.</title>
        <authorList>
            <person name="Kettler G.C."/>
            <person name="Martiny A.C."/>
            <person name="Huang K."/>
            <person name="Zucker J."/>
            <person name="Coleman M.L."/>
            <person name="Rodrigue S."/>
            <person name="Chen F."/>
            <person name="Lapidus A."/>
            <person name="Ferriera S."/>
            <person name="Johnson J."/>
            <person name="Steglich C."/>
            <person name="Church G.M."/>
            <person name="Richardson P."/>
            <person name="Chisholm S.W."/>
        </authorList>
    </citation>
    <scope>NUCLEOTIDE SEQUENCE [LARGE SCALE GENOMIC DNA]</scope>
    <source>
        <strain>MIT 9301</strain>
    </source>
</reference>
<proteinExistence type="inferred from homology"/>
<accession>A3PET8</accession>
<gene>
    <name evidence="1" type="primary">atpG</name>
    <name evidence="1" type="synonym">atpC</name>
    <name type="ordered locus">P9301_16401</name>
</gene>
<comment type="function">
    <text evidence="1">Produces ATP from ADP in the presence of a proton gradient across the membrane. The gamma chain is believed to be important in regulating ATPase activity and the flow of protons through the CF(0) complex.</text>
</comment>
<comment type="subunit">
    <text evidence="1">F-type ATPases have 2 components, CF(1) - the catalytic core - and CF(0) - the membrane proton channel. CF(1) has five subunits: alpha(3), beta(3), gamma(1), delta(1), epsilon(1). CF(0) has three main subunits: a, b and c.</text>
</comment>
<comment type="subcellular location">
    <subcellularLocation>
        <location evidence="1">Cellular thylakoid membrane</location>
        <topology evidence="1">Peripheral membrane protein</topology>
    </subcellularLocation>
</comment>
<comment type="similarity">
    <text evidence="1">Belongs to the ATPase gamma chain family.</text>
</comment>
<dbReference type="EMBL" id="CP000576">
    <property type="protein sequence ID" value="ABO18263.1"/>
    <property type="molecule type" value="Genomic_DNA"/>
</dbReference>
<dbReference type="RefSeq" id="WP_011863562.1">
    <property type="nucleotide sequence ID" value="NC_009091.1"/>
</dbReference>
<dbReference type="SMR" id="A3PET8"/>
<dbReference type="STRING" id="167546.P9301_16401"/>
<dbReference type="KEGG" id="pmg:P9301_16401"/>
<dbReference type="eggNOG" id="COG0224">
    <property type="taxonomic scope" value="Bacteria"/>
</dbReference>
<dbReference type="HOGENOM" id="CLU_050669_0_0_3"/>
<dbReference type="OrthoDB" id="9812769at2"/>
<dbReference type="Proteomes" id="UP000001430">
    <property type="component" value="Chromosome"/>
</dbReference>
<dbReference type="GO" id="GO:0031676">
    <property type="term" value="C:plasma membrane-derived thylakoid membrane"/>
    <property type="evidence" value="ECO:0007669"/>
    <property type="project" value="UniProtKB-SubCell"/>
</dbReference>
<dbReference type="GO" id="GO:0045259">
    <property type="term" value="C:proton-transporting ATP synthase complex"/>
    <property type="evidence" value="ECO:0007669"/>
    <property type="project" value="UniProtKB-KW"/>
</dbReference>
<dbReference type="GO" id="GO:0005524">
    <property type="term" value="F:ATP binding"/>
    <property type="evidence" value="ECO:0007669"/>
    <property type="project" value="UniProtKB-UniRule"/>
</dbReference>
<dbReference type="GO" id="GO:0046933">
    <property type="term" value="F:proton-transporting ATP synthase activity, rotational mechanism"/>
    <property type="evidence" value="ECO:0007669"/>
    <property type="project" value="UniProtKB-UniRule"/>
</dbReference>
<dbReference type="CDD" id="cd12151">
    <property type="entry name" value="F1-ATPase_gamma"/>
    <property type="match status" value="1"/>
</dbReference>
<dbReference type="FunFam" id="3.40.1380.10:FF:000006">
    <property type="entry name" value="ATP synthase gamma chain"/>
    <property type="match status" value="1"/>
</dbReference>
<dbReference type="FunFam" id="1.10.287.80:FF:000003">
    <property type="entry name" value="ATP synthase gamma chain, chloroplastic"/>
    <property type="match status" value="1"/>
</dbReference>
<dbReference type="Gene3D" id="3.40.1380.10">
    <property type="match status" value="1"/>
</dbReference>
<dbReference type="Gene3D" id="1.10.287.80">
    <property type="entry name" value="ATP synthase, gamma subunit, helix hairpin domain"/>
    <property type="match status" value="2"/>
</dbReference>
<dbReference type="HAMAP" id="MF_00815">
    <property type="entry name" value="ATP_synth_gamma_bact"/>
    <property type="match status" value="1"/>
</dbReference>
<dbReference type="InterPro" id="IPR035968">
    <property type="entry name" value="ATP_synth_F1_ATPase_gsu"/>
</dbReference>
<dbReference type="InterPro" id="IPR000131">
    <property type="entry name" value="ATP_synth_F1_gsu"/>
</dbReference>
<dbReference type="NCBIfam" id="TIGR01146">
    <property type="entry name" value="ATPsyn_F1gamma"/>
    <property type="match status" value="1"/>
</dbReference>
<dbReference type="NCBIfam" id="NF004145">
    <property type="entry name" value="PRK05621.1-2"/>
    <property type="match status" value="1"/>
</dbReference>
<dbReference type="PANTHER" id="PTHR11693">
    <property type="entry name" value="ATP SYNTHASE GAMMA CHAIN"/>
    <property type="match status" value="1"/>
</dbReference>
<dbReference type="PANTHER" id="PTHR11693:SF41">
    <property type="entry name" value="ATP SYNTHASE GAMMA CHAIN, CHLOROPLASTIC"/>
    <property type="match status" value="1"/>
</dbReference>
<dbReference type="Pfam" id="PF00231">
    <property type="entry name" value="ATP-synt"/>
    <property type="match status" value="1"/>
</dbReference>
<dbReference type="PRINTS" id="PR00126">
    <property type="entry name" value="ATPASEGAMMA"/>
</dbReference>
<dbReference type="SUPFAM" id="SSF52943">
    <property type="entry name" value="ATP synthase (F1-ATPase), gamma subunit"/>
    <property type="match status" value="1"/>
</dbReference>
<feature type="chain" id="PRO_1000053282" description="ATP synthase gamma chain">
    <location>
        <begin position="1"/>
        <end position="316"/>
    </location>
</feature>
<keyword id="KW-0066">ATP synthesis</keyword>
<keyword id="KW-0139">CF(1)</keyword>
<keyword id="KW-0375">Hydrogen ion transport</keyword>
<keyword id="KW-0406">Ion transport</keyword>
<keyword id="KW-0472">Membrane</keyword>
<keyword id="KW-1185">Reference proteome</keyword>
<keyword id="KW-0793">Thylakoid</keyword>
<keyword id="KW-0813">Transport</keyword>
<name>ATPG_PROM0</name>
<evidence type="ECO:0000255" key="1">
    <source>
        <dbReference type="HAMAP-Rule" id="MF_00815"/>
    </source>
</evidence>
<organism>
    <name type="scientific">Prochlorococcus marinus (strain MIT 9301)</name>
    <dbReference type="NCBI Taxonomy" id="167546"/>
    <lineage>
        <taxon>Bacteria</taxon>
        <taxon>Bacillati</taxon>
        <taxon>Cyanobacteriota</taxon>
        <taxon>Cyanophyceae</taxon>
        <taxon>Synechococcales</taxon>
        <taxon>Prochlorococcaceae</taxon>
        <taxon>Prochlorococcus</taxon>
    </lineage>
</organism>